<gene>
    <name evidence="5" type="primary">ANKRD31</name>
</gene>
<keyword id="KW-0040">ANK repeat</keyword>
<keyword id="KW-0158">Chromosome</keyword>
<keyword id="KW-0233">DNA recombination</keyword>
<keyword id="KW-0469">Meiosis</keyword>
<keyword id="KW-0539">Nucleus</keyword>
<keyword id="KW-1267">Proteomics identification</keyword>
<keyword id="KW-1185">Reference proteome</keyword>
<keyword id="KW-0677">Repeat</keyword>
<comment type="function">
    <text evidence="1">Required for DNA double-strand breaks (DSBs) formation during meiotic recombination. Regulates the spatial and temporal patterns of pre-DSB recombinosome assembly and recombination activity by acting as a scaffold that anchors REC114 and other factors to specific genomic locations, thereby regulating DSB formation. Plays a key role in recombination in the pseudoautosomal regions of sex chromosomes.</text>
</comment>
<comment type="subunit">
    <text evidence="1">Interacts with REC114; the interaction is direct. Interacts with IHO1.</text>
</comment>
<comment type="subcellular location">
    <subcellularLocation>
        <location evidence="1">Nucleus</location>
    </subcellularLocation>
    <subcellularLocation>
        <location evidence="1">Chromosome</location>
    </subcellularLocation>
    <text evidence="1">Localizes on chromatin between preleptotene and early pachytene. Associates with the chromosome axes, but disappears from axes upon synaptonemal complex formation.</text>
</comment>
<name>ANR31_HUMAN</name>
<feature type="chain" id="PRO_0000328839" description="Ankyrin repeat domain-containing protein 31">
    <location>
        <begin position="1"/>
        <end position="1873"/>
    </location>
</feature>
<feature type="repeat" description="ANK 1">
    <location>
        <begin position="488"/>
        <end position="517"/>
    </location>
</feature>
<feature type="repeat" description="ANK 2">
    <location>
        <begin position="521"/>
        <end position="550"/>
    </location>
</feature>
<feature type="repeat" description="ANK 3">
    <location>
        <begin position="554"/>
        <end position="583"/>
    </location>
</feature>
<feature type="repeat" description="ANK 4">
    <location>
        <begin position="1154"/>
        <end position="1183"/>
    </location>
</feature>
<feature type="repeat" description="ANK 5">
    <location>
        <begin position="1187"/>
        <end position="1216"/>
    </location>
</feature>
<feature type="repeat" description="ANK 6">
    <location>
        <begin position="1220"/>
        <end position="1249"/>
    </location>
</feature>
<feature type="domain" description="RAMA" evidence="2">
    <location>
        <begin position="1683"/>
        <end position="1778"/>
    </location>
</feature>
<feature type="region of interest" description="Disordered" evidence="3">
    <location>
        <begin position="1"/>
        <end position="27"/>
    </location>
</feature>
<feature type="region of interest" description="Disordered" evidence="3">
    <location>
        <begin position="361"/>
        <end position="380"/>
    </location>
</feature>
<feature type="region of interest" description="Disordered" evidence="3">
    <location>
        <begin position="707"/>
        <end position="740"/>
    </location>
</feature>
<feature type="region of interest" description="Disordered" evidence="3">
    <location>
        <begin position="1242"/>
        <end position="1263"/>
    </location>
</feature>
<feature type="region of interest" description="Disordered" evidence="3">
    <location>
        <begin position="1449"/>
        <end position="1482"/>
    </location>
</feature>
<feature type="region of interest" description="Disordered" evidence="3">
    <location>
        <begin position="1512"/>
        <end position="1549"/>
    </location>
</feature>
<feature type="region of interest" description="Disordered" evidence="3">
    <location>
        <begin position="1606"/>
        <end position="1634"/>
    </location>
</feature>
<feature type="compositionally biased region" description="Polar residues" evidence="3">
    <location>
        <begin position="361"/>
        <end position="379"/>
    </location>
</feature>
<feature type="compositionally biased region" description="Basic residues" evidence="3">
    <location>
        <begin position="728"/>
        <end position="737"/>
    </location>
</feature>
<feature type="compositionally biased region" description="Basic and acidic residues" evidence="3">
    <location>
        <begin position="1250"/>
        <end position="1263"/>
    </location>
</feature>
<feature type="compositionally biased region" description="Polar residues" evidence="3">
    <location>
        <begin position="1460"/>
        <end position="1482"/>
    </location>
</feature>
<feature type="compositionally biased region" description="Polar residues" evidence="3">
    <location>
        <begin position="1515"/>
        <end position="1525"/>
    </location>
</feature>
<feature type="compositionally biased region" description="Basic and acidic residues" evidence="3">
    <location>
        <begin position="1535"/>
        <end position="1544"/>
    </location>
</feature>
<feature type="compositionally biased region" description="Polar residues" evidence="3">
    <location>
        <begin position="1621"/>
        <end position="1632"/>
    </location>
</feature>
<feature type="sequence variant" id="VAR_042542" description="In dbSNP:rs1422698.">
    <original>D</original>
    <variation>N</variation>
    <location>
        <position position="702"/>
    </location>
</feature>
<feature type="sequence variant" id="VAR_042543" description="In dbSNP:rs6893216.">
    <original>R</original>
    <variation>G</variation>
    <location>
        <position position="758"/>
    </location>
</feature>
<feature type="sequence variant" id="VAR_042544" description="In dbSNP:rs961098.">
    <original>D</original>
    <variation>E</variation>
    <location>
        <position position="1609"/>
    </location>
</feature>
<feature type="sequence variant" id="VAR_042545" description="In dbSNP:rs4489037.">
    <original>R</original>
    <variation>K</variation>
    <location>
        <position position="1777"/>
    </location>
</feature>
<feature type="sequence conflict" description="In Ref. 2; BAC05081." evidence="4" ref="2">
    <original>K</original>
    <variation>R</variation>
    <location>
        <position position="444"/>
    </location>
</feature>
<proteinExistence type="evidence at protein level"/>
<evidence type="ECO:0000250" key="1">
    <source>
        <dbReference type="UniProtKB" id="A0A140LI88"/>
    </source>
</evidence>
<evidence type="ECO:0000255" key="2"/>
<evidence type="ECO:0000256" key="3">
    <source>
        <dbReference type="SAM" id="MobiDB-lite"/>
    </source>
</evidence>
<evidence type="ECO:0000305" key="4"/>
<evidence type="ECO:0000312" key="5">
    <source>
        <dbReference type="HGNC" id="HGNC:26853"/>
    </source>
</evidence>
<sequence length="1873" mass="210816">MEEGVQAPDWDSDETVIEGSVTESDLEEKELPWRRLLFDQDASLKSEFSLHPDTRGMCKGMPSPEIQLGFKLREDLQEQMNKNKMMPVLSEDTILQSQDETERNQALLQTRKNCSMFIGSFRQSGLSLNHQNIEGPEAESPEVLPHIEKELSEGRDSPEVSLLSGTAITVSDTVAVKETSLVEPEKILAAPNTFFEPRKEVTMTMTSEETKDEESSLETFVSALESLLTSPESTQEERLFELVSDFDRKELMNPLSDSLSSISIPLNSWSACHRDLLEDAKDDALPAELLEALNTLSEAKVETICHRKEGGSSLIARNECLEVEFNTSQTNEDCTQIAETLQDPNPSGLQTLAHQNITSCEPLSNKRNSNSVTNSSDQETACVLRRSSRLEKLKVSRDAKYSDHMYKMPEKILPKILGCEDLTNNNSSAQNFRMQDPALMIDGKEKNMHSARFKNGKQIRKNEQFSGKKEKMKVNKISLHSINRRNIFGENLVYKAALHDDADLVHHCIKKGGNVNQPSYAGWTALHEASVGGFYRTASELLKGGADVNIKGLYQITPLHDAVMNGHYKVAELLLLNGADPLFRNDDGKCALDEAKDLCMKRLLERYIPKHQKCLTSAQRSSIDPLDIEDVYQHKKPKFSSKSHIWHVYNENSNRQKLEHVKVNKGSKASLFINKEDVYEYYQKDPKNTKFGKSKHKQSTLDQIYSTGLRKGNLHNVKDPNTNVPKGIGRRKTQHKRTQVDDVDCNPRKILAVSPSRRINRLVTYQQHIPETHNDLPEELCEPSSLTLSSLRNGLDSSTEACSVSKEKHIQNLDLSDSQEVQCLELESVDQTEAVSFPGLLLHKEIKLPVVTTDKQPHTLQEQHHVLYKSHENSNLVPKDERFNKWENSFLSFVKENSDNDDDDDCSTSEKAITSKKVLCSTGGKKHYNFKENLTNKKEMGFQQFLLSEDHLSQENELKAVSLTTLPEQEAVNFSYSDNAVISEHVANYEQCIFGPSFDHSNGNPEQNSLACMRTLLTHEASKLTNHVELFKKPQDYIPRAPTFLMNQTDTHIVEKMAKNCDTERNYIDRDQKIIYSNEPLSIVAHSQVIETTKVEKRRQNHLESETIHNIDSHSTDNMSKELANISKLSQREKKEISHKPGMKAGRINKRNARGESQLHLAVRRGNLPLVKALIESGADVNLNDNAGWTPLHEASNEGSIDIIVELLKAGAKVNCENIDGILPLHDAVANNHLKAAEILLQNGANPNQKDQKQKSALDEADDEKMKELLRSYGAIETVNRDESDAIVNEKIPAVRSKRHKQCFCDDGKTIDSSSLSHQERSRESLSVHQTLSAILQDIEEKQEYLLEFEIRNPEDAEQYIEKMLKIKKIMDNVLAKQKAERDDLAKKYRVSIESFKHGALREQLANLAARQKSLLVVAKKQKKISLKIQNCRNVTSLPCLSLRKLPPRSEISSEKDSQELTSLENLEHPQSGSLSPVSGSMQETQLSLETWNYSQNTNICLNSEAVRRGEFSGNDMNSKQNGSDCTLDGFPKSRHSDGTEKNKLPSQPVAFIGQTEYSQKENDLTEATDKDHEFYVSSPVIGKLNISETASVLAENAAHPSNIICDQDLSNYDPKRGNRKTSSQQSPTGASESLAHQGIAVLGSDTVHQMKPYLKKSVSVVPCADDSQISSSSGSGQQDTIKKALNYSTAPKKKCIQIKDLILLGRINPGNNILEFKTQETTHKASILLNGKLKVESGQIYKNPVTWLKDLLGGNSYVTWNYAWSKVTYLGKELLRYVSEDAPILPEPNSVPQQYQPCLPEVACLDDPVQEPNKSMFEKTKFGQGTSRESMQSSPRYLQINEILLISDQEFLPCHIMDQHWKFCVECEELTP</sequence>
<reference key="1">
    <citation type="journal article" date="2004" name="Nature">
        <title>The DNA sequence and comparative analysis of human chromosome 5.</title>
        <authorList>
            <person name="Schmutz J."/>
            <person name="Martin J."/>
            <person name="Terry A."/>
            <person name="Couronne O."/>
            <person name="Grimwood J."/>
            <person name="Lowry S."/>
            <person name="Gordon L.A."/>
            <person name="Scott D."/>
            <person name="Xie G."/>
            <person name="Huang W."/>
            <person name="Hellsten U."/>
            <person name="Tran-Gyamfi M."/>
            <person name="She X."/>
            <person name="Prabhakar S."/>
            <person name="Aerts A."/>
            <person name="Altherr M."/>
            <person name="Bajorek E."/>
            <person name="Black S."/>
            <person name="Branscomb E."/>
            <person name="Caoile C."/>
            <person name="Challacombe J.F."/>
            <person name="Chan Y.M."/>
            <person name="Denys M."/>
            <person name="Detter J.C."/>
            <person name="Escobar J."/>
            <person name="Flowers D."/>
            <person name="Fotopulos D."/>
            <person name="Glavina T."/>
            <person name="Gomez M."/>
            <person name="Gonzales E."/>
            <person name="Goodstein D."/>
            <person name="Grigoriev I."/>
            <person name="Groza M."/>
            <person name="Hammon N."/>
            <person name="Hawkins T."/>
            <person name="Haydu L."/>
            <person name="Israni S."/>
            <person name="Jett J."/>
            <person name="Kadner K."/>
            <person name="Kimball H."/>
            <person name="Kobayashi A."/>
            <person name="Lopez F."/>
            <person name="Lou Y."/>
            <person name="Martinez D."/>
            <person name="Medina C."/>
            <person name="Morgan J."/>
            <person name="Nandkeshwar R."/>
            <person name="Noonan J.P."/>
            <person name="Pitluck S."/>
            <person name="Pollard M."/>
            <person name="Predki P."/>
            <person name="Priest J."/>
            <person name="Ramirez L."/>
            <person name="Retterer J."/>
            <person name="Rodriguez A."/>
            <person name="Rogers S."/>
            <person name="Salamov A."/>
            <person name="Salazar A."/>
            <person name="Thayer N."/>
            <person name="Tice H."/>
            <person name="Tsai M."/>
            <person name="Ustaszewska A."/>
            <person name="Vo N."/>
            <person name="Wheeler J."/>
            <person name="Wu K."/>
            <person name="Yang J."/>
            <person name="Dickson M."/>
            <person name="Cheng J.-F."/>
            <person name="Eichler E.E."/>
            <person name="Olsen A."/>
            <person name="Pennacchio L.A."/>
            <person name="Rokhsar D.S."/>
            <person name="Richardson P."/>
            <person name="Lucas S.M."/>
            <person name="Myers R.M."/>
            <person name="Rubin E.M."/>
        </authorList>
    </citation>
    <scope>NUCLEOTIDE SEQUENCE [LARGE SCALE GENOMIC DNA]</scope>
</reference>
<reference key="2">
    <citation type="journal article" date="2004" name="Nat. Genet.">
        <title>Complete sequencing and characterization of 21,243 full-length human cDNAs.</title>
        <authorList>
            <person name="Ota T."/>
            <person name="Suzuki Y."/>
            <person name="Nishikawa T."/>
            <person name="Otsuki T."/>
            <person name="Sugiyama T."/>
            <person name="Irie R."/>
            <person name="Wakamatsu A."/>
            <person name="Hayashi K."/>
            <person name="Sato H."/>
            <person name="Nagai K."/>
            <person name="Kimura K."/>
            <person name="Makita H."/>
            <person name="Sekine M."/>
            <person name="Obayashi M."/>
            <person name="Nishi T."/>
            <person name="Shibahara T."/>
            <person name="Tanaka T."/>
            <person name="Ishii S."/>
            <person name="Yamamoto J."/>
            <person name="Saito K."/>
            <person name="Kawai Y."/>
            <person name="Isono Y."/>
            <person name="Nakamura Y."/>
            <person name="Nagahari K."/>
            <person name="Murakami K."/>
            <person name="Yasuda T."/>
            <person name="Iwayanagi T."/>
            <person name="Wagatsuma M."/>
            <person name="Shiratori A."/>
            <person name="Sudo H."/>
            <person name="Hosoiri T."/>
            <person name="Kaku Y."/>
            <person name="Kodaira H."/>
            <person name="Kondo H."/>
            <person name="Sugawara M."/>
            <person name="Takahashi M."/>
            <person name="Kanda K."/>
            <person name="Yokoi T."/>
            <person name="Furuya T."/>
            <person name="Kikkawa E."/>
            <person name="Omura Y."/>
            <person name="Abe K."/>
            <person name="Kamihara K."/>
            <person name="Katsuta N."/>
            <person name="Sato K."/>
            <person name="Tanikawa M."/>
            <person name="Yamazaki M."/>
            <person name="Ninomiya K."/>
            <person name="Ishibashi T."/>
            <person name="Yamashita H."/>
            <person name="Murakawa K."/>
            <person name="Fujimori K."/>
            <person name="Tanai H."/>
            <person name="Kimata M."/>
            <person name="Watanabe M."/>
            <person name="Hiraoka S."/>
            <person name="Chiba Y."/>
            <person name="Ishida S."/>
            <person name="Ono Y."/>
            <person name="Takiguchi S."/>
            <person name="Watanabe S."/>
            <person name="Yosida M."/>
            <person name="Hotuta T."/>
            <person name="Kusano J."/>
            <person name="Kanehori K."/>
            <person name="Takahashi-Fujii A."/>
            <person name="Hara H."/>
            <person name="Tanase T.-O."/>
            <person name="Nomura Y."/>
            <person name="Togiya S."/>
            <person name="Komai F."/>
            <person name="Hara R."/>
            <person name="Takeuchi K."/>
            <person name="Arita M."/>
            <person name="Imose N."/>
            <person name="Musashino K."/>
            <person name="Yuuki H."/>
            <person name="Oshima A."/>
            <person name="Sasaki N."/>
            <person name="Aotsuka S."/>
            <person name="Yoshikawa Y."/>
            <person name="Matsunawa H."/>
            <person name="Ichihara T."/>
            <person name="Shiohata N."/>
            <person name="Sano S."/>
            <person name="Moriya S."/>
            <person name="Momiyama H."/>
            <person name="Satoh N."/>
            <person name="Takami S."/>
            <person name="Terashima Y."/>
            <person name="Suzuki O."/>
            <person name="Nakagawa S."/>
            <person name="Senoh A."/>
            <person name="Mizoguchi H."/>
            <person name="Goto Y."/>
            <person name="Shimizu F."/>
            <person name="Wakebe H."/>
            <person name="Hishigaki H."/>
            <person name="Watanabe T."/>
            <person name="Sugiyama A."/>
            <person name="Takemoto M."/>
            <person name="Kawakami B."/>
            <person name="Yamazaki M."/>
            <person name="Watanabe K."/>
            <person name="Kumagai A."/>
            <person name="Itakura S."/>
            <person name="Fukuzumi Y."/>
            <person name="Fujimori Y."/>
            <person name="Komiyama M."/>
            <person name="Tashiro H."/>
            <person name="Tanigami A."/>
            <person name="Fujiwara T."/>
            <person name="Ono T."/>
            <person name="Yamada K."/>
            <person name="Fujii Y."/>
            <person name="Ozaki K."/>
            <person name="Hirao M."/>
            <person name="Ohmori Y."/>
            <person name="Kawabata A."/>
            <person name="Hikiji T."/>
            <person name="Kobatake N."/>
            <person name="Inagaki H."/>
            <person name="Ikema Y."/>
            <person name="Okamoto S."/>
            <person name="Okitani R."/>
            <person name="Kawakami T."/>
            <person name="Noguchi S."/>
            <person name="Itoh T."/>
            <person name="Shigeta K."/>
            <person name="Senba T."/>
            <person name="Matsumura K."/>
            <person name="Nakajima Y."/>
            <person name="Mizuno T."/>
            <person name="Morinaga M."/>
            <person name="Sasaki M."/>
            <person name="Togashi T."/>
            <person name="Oyama M."/>
            <person name="Hata H."/>
            <person name="Watanabe M."/>
            <person name="Komatsu T."/>
            <person name="Mizushima-Sugano J."/>
            <person name="Satoh T."/>
            <person name="Shirai Y."/>
            <person name="Takahashi Y."/>
            <person name="Nakagawa K."/>
            <person name="Okumura K."/>
            <person name="Nagase T."/>
            <person name="Nomura N."/>
            <person name="Kikuchi H."/>
            <person name="Masuho Y."/>
            <person name="Yamashita R."/>
            <person name="Nakai K."/>
            <person name="Yada T."/>
            <person name="Nakamura Y."/>
            <person name="Ohara O."/>
            <person name="Isogai T."/>
            <person name="Sugano S."/>
        </authorList>
    </citation>
    <scope>NUCLEOTIDE SEQUENCE [LARGE SCALE MRNA] OF 1-725</scope>
    <source>
        <tissue>Testis</tissue>
    </source>
</reference>
<accession>Q8N7Z5</accession>
<protein>
    <recommendedName>
        <fullName evidence="4">Ankyrin repeat domain-containing protein 31</fullName>
    </recommendedName>
</protein>
<dbReference type="EMBL" id="AC008769">
    <property type="status" value="NOT_ANNOTATED_CDS"/>
    <property type="molecule type" value="Genomic_DNA"/>
</dbReference>
<dbReference type="EMBL" id="AC093259">
    <property type="status" value="NOT_ANNOTATED_CDS"/>
    <property type="molecule type" value="Genomic_DNA"/>
</dbReference>
<dbReference type="EMBL" id="AK097510">
    <property type="protein sequence ID" value="BAC05081.1"/>
    <property type="molecule type" value="mRNA"/>
</dbReference>
<dbReference type="CCDS" id="CCDS47233.1"/>
<dbReference type="RefSeq" id="NP_001157915.1">
    <property type="nucleotide sequence ID" value="NM_001164443.1"/>
</dbReference>
<dbReference type="SMR" id="Q8N7Z5"/>
<dbReference type="BioGRID" id="129131">
    <property type="interactions" value="6"/>
</dbReference>
<dbReference type="FunCoup" id="Q8N7Z5">
    <property type="interactions" value="100"/>
</dbReference>
<dbReference type="IntAct" id="Q8N7Z5">
    <property type="interactions" value="4"/>
</dbReference>
<dbReference type="MINT" id="Q8N7Z5"/>
<dbReference type="STRING" id="9606.ENSP00000274361"/>
<dbReference type="CarbonylDB" id="Q8N7Z5"/>
<dbReference type="GlyGen" id="Q8N7Z5">
    <property type="glycosylation" value="1 site, 1 O-linked glycan (1 site)"/>
</dbReference>
<dbReference type="iPTMnet" id="Q8N7Z5"/>
<dbReference type="PhosphoSitePlus" id="Q8N7Z5"/>
<dbReference type="BioMuta" id="ANKRD31"/>
<dbReference type="DMDM" id="182627587"/>
<dbReference type="jPOST" id="Q8N7Z5"/>
<dbReference type="MassIVE" id="Q8N7Z5"/>
<dbReference type="PaxDb" id="9606-ENSP00000274361"/>
<dbReference type="PeptideAtlas" id="Q8N7Z5"/>
<dbReference type="ProteomicsDB" id="72350"/>
<dbReference type="Antibodypedia" id="48719">
    <property type="antibodies" value="5 antibodies from 5 providers"/>
</dbReference>
<dbReference type="DNASU" id="256006"/>
<dbReference type="Ensembl" id="ENST00000274361.3">
    <property type="protein sequence ID" value="ENSP00000274361.3"/>
    <property type="gene ID" value="ENSG00000145700.10"/>
</dbReference>
<dbReference type="GeneID" id="256006"/>
<dbReference type="KEGG" id="hsa:256006"/>
<dbReference type="UCSC" id="uc003kdo.2">
    <property type="organism name" value="human"/>
</dbReference>
<dbReference type="AGR" id="HGNC:26853"/>
<dbReference type="CTD" id="256006"/>
<dbReference type="DisGeNET" id="256006"/>
<dbReference type="GeneCards" id="ANKRD31"/>
<dbReference type="HGNC" id="HGNC:26853">
    <property type="gene designation" value="ANKRD31"/>
</dbReference>
<dbReference type="HPA" id="ENSG00000145700">
    <property type="expression patterns" value="Tissue enriched (testis)"/>
</dbReference>
<dbReference type="MalaCards" id="ANKRD31"/>
<dbReference type="MIM" id="618423">
    <property type="type" value="gene"/>
</dbReference>
<dbReference type="neXtProt" id="NX_Q8N7Z5"/>
<dbReference type="OpenTargets" id="ENSG00000145700"/>
<dbReference type="PharmGKB" id="PA134879237"/>
<dbReference type="VEuPathDB" id="HostDB:ENSG00000145700"/>
<dbReference type="eggNOG" id="ENOG502QS0Y">
    <property type="taxonomic scope" value="Eukaryota"/>
</dbReference>
<dbReference type="GeneTree" id="ENSGT00940000162618"/>
<dbReference type="HOGENOM" id="CLU_003348_0_0_1"/>
<dbReference type="InParanoid" id="Q8N7Z5"/>
<dbReference type="OrthoDB" id="2384350at2759"/>
<dbReference type="PAN-GO" id="Q8N7Z5">
    <property type="GO annotations" value="0 GO annotations based on evolutionary models"/>
</dbReference>
<dbReference type="PhylomeDB" id="Q8N7Z5"/>
<dbReference type="TreeFam" id="TF326440"/>
<dbReference type="PathwayCommons" id="Q8N7Z5"/>
<dbReference type="SignaLink" id="Q8N7Z5"/>
<dbReference type="BioGRID-ORCS" id="256006">
    <property type="hits" value="12 hits in 992 CRISPR screens"/>
</dbReference>
<dbReference type="ChiTaRS" id="ANKRD31">
    <property type="organism name" value="human"/>
</dbReference>
<dbReference type="GenomeRNAi" id="256006"/>
<dbReference type="Pharos" id="Q8N7Z5">
    <property type="development level" value="Tdark"/>
</dbReference>
<dbReference type="PRO" id="PR:Q8N7Z5"/>
<dbReference type="Proteomes" id="UP000005640">
    <property type="component" value="Chromosome 5"/>
</dbReference>
<dbReference type="RNAct" id="Q8N7Z5">
    <property type="molecule type" value="protein"/>
</dbReference>
<dbReference type="Bgee" id="ENSG00000145700">
    <property type="expression patterns" value="Expressed in male germ line stem cell (sensu Vertebrata) in testis and 65 other cell types or tissues"/>
</dbReference>
<dbReference type="ExpressionAtlas" id="Q8N7Z5">
    <property type="expression patterns" value="baseline and differential"/>
</dbReference>
<dbReference type="GO" id="GO:0000785">
    <property type="term" value="C:chromatin"/>
    <property type="evidence" value="ECO:0000250"/>
    <property type="project" value="UniProtKB"/>
</dbReference>
<dbReference type="GO" id="GO:0005634">
    <property type="term" value="C:nucleus"/>
    <property type="evidence" value="ECO:0007669"/>
    <property type="project" value="UniProtKB-SubCell"/>
</dbReference>
<dbReference type="GO" id="GO:0007129">
    <property type="term" value="P:homologous chromosome pairing at meiosis"/>
    <property type="evidence" value="ECO:0000250"/>
    <property type="project" value="UniProtKB"/>
</dbReference>
<dbReference type="GO" id="GO:0010780">
    <property type="term" value="P:meiotic DNA double-strand break formation involved in reciprocal meiotic recombination"/>
    <property type="evidence" value="ECO:0000250"/>
    <property type="project" value="UniProtKB"/>
</dbReference>
<dbReference type="GO" id="GO:1903343">
    <property type="term" value="P:positive regulation of meiotic DNA double-strand break formation"/>
    <property type="evidence" value="ECO:0000250"/>
    <property type="project" value="UniProtKB"/>
</dbReference>
<dbReference type="FunFam" id="1.25.40.20:FF:000363">
    <property type="entry name" value="Ankyrin repeat domain 31"/>
    <property type="match status" value="1"/>
</dbReference>
<dbReference type="FunFam" id="1.25.40.20:FF:000438">
    <property type="entry name" value="Ankyrin repeat domain 31"/>
    <property type="match status" value="1"/>
</dbReference>
<dbReference type="Gene3D" id="1.25.40.20">
    <property type="entry name" value="Ankyrin repeat-containing domain"/>
    <property type="match status" value="2"/>
</dbReference>
<dbReference type="InterPro" id="IPR042334">
    <property type="entry name" value="ANKRD31"/>
</dbReference>
<dbReference type="InterPro" id="IPR002110">
    <property type="entry name" value="Ankyrin_rpt"/>
</dbReference>
<dbReference type="InterPro" id="IPR036770">
    <property type="entry name" value="Ankyrin_rpt-contain_sf"/>
</dbReference>
<dbReference type="InterPro" id="IPR040843">
    <property type="entry name" value="RAMA"/>
</dbReference>
<dbReference type="PANTHER" id="PTHR24176:SF14">
    <property type="entry name" value="ANKYRIN REPEAT DOMAIN-CONTAINING PROTEIN 31"/>
    <property type="match status" value="1"/>
</dbReference>
<dbReference type="PANTHER" id="PTHR24176">
    <property type="entry name" value="ANKYRIN REPEAT DOMAIN-CONTAINING PROTEIN 31-RELATED"/>
    <property type="match status" value="1"/>
</dbReference>
<dbReference type="Pfam" id="PF12796">
    <property type="entry name" value="Ank_2"/>
    <property type="match status" value="2"/>
</dbReference>
<dbReference type="Pfam" id="PF18755">
    <property type="entry name" value="RAMA"/>
    <property type="match status" value="1"/>
</dbReference>
<dbReference type="PRINTS" id="PR01415">
    <property type="entry name" value="ANKYRIN"/>
</dbReference>
<dbReference type="SMART" id="SM00248">
    <property type="entry name" value="ANK"/>
    <property type="match status" value="6"/>
</dbReference>
<dbReference type="SUPFAM" id="SSF48403">
    <property type="entry name" value="Ankyrin repeat"/>
    <property type="match status" value="2"/>
</dbReference>
<dbReference type="PROSITE" id="PS50297">
    <property type="entry name" value="ANK_REP_REGION"/>
    <property type="match status" value="2"/>
</dbReference>
<dbReference type="PROSITE" id="PS50088">
    <property type="entry name" value="ANK_REPEAT"/>
    <property type="match status" value="5"/>
</dbReference>
<organism>
    <name type="scientific">Homo sapiens</name>
    <name type="common">Human</name>
    <dbReference type="NCBI Taxonomy" id="9606"/>
    <lineage>
        <taxon>Eukaryota</taxon>
        <taxon>Metazoa</taxon>
        <taxon>Chordata</taxon>
        <taxon>Craniata</taxon>
        <taxon>Vertebrata</taxon>
        <taxon>Euteleostomi</taxon>
        <taxon>Mammalia</taxon>
        <taxon>Eutheria</taxon>
        <taxon>Euarchontoglires</taxon>
        <taxon>Primates</taxon>
        <taxon>Haplorrhini</taxon>
        <taxon>Catarrhini</taxon>
        <taxon>Hominidae</taxon>
        <taxon>Homo</taxon>
    </lineage>
</organism>